<protein>
    <recommendedName>
        <fullName evidence="1">Ornithine cyclodeaminase</fullName>
        <shortName evidence="1">OCD</shortName>
        <ecNumber evidence="2">4.3.1.12</ecNumber>
    </recommendedName>
</protein>
<reference key="1">
    <citation type="journal article" date="2002" name="Proc. Natl. Acad. Sci. U.S.A.">
        <title>The Brucella suis genome reveals fundamental similarities between animal and plant pathogens and symbionts.</title>
        <authorList>
            <person name="Paulsen I.T."/>
            <person name="Seshadri R."/>
            <person name="Nelson K.E."/>
            <person name="Eisen J.A."/>
            <person name="Heidelberg J.F."/>
            <person name="Read T.D."/>
            <person name="Dodson R.J."/>
            <person name="Umayam L.A."/>
            <person name="Brinkac L.M."/>
            <person name="Beanan M.J."/>
            <person name="Daugherty S.C."/>
            <person name="DeBoy R.T."/>
            <person name="Durkin A.S."/>
            <person name="Kolonay J.F."/>
            <person name="Madupu R."/>
            <person name="Nelson W.C."/>
            <person name="Ayodeji B."/>
            <person name="Kraul M."/>
            <person name="Shetty J."/>
            <person name="Malek J.A."/>
            <person name="Van Aken S.E."/>
            <person name="Riedmuller S."/>
            <person name="Tettelin H."/>
            <person name="Gill S.R."/>
            <person name="White O."/>
            <person name="Salzberg S.L."/>
            <person name="Hoover D.L."/>
            <person name="Lindler L.E."/>
            <person name="Halling S.M."/>
            <person name="Boyle S.M."/>
            <person name="Fraser C.M."/>
        </authorList>
    </citation>
    <scope>NUCLEOTIDE SEQUENCE [LARGE SCALE GENOMIC DNA]</scope>
    <source>
        <strain>1330</strain>
    </source>
</reference>
<reference key="2">
    <citation type="journal article" date="2011" name="J. Bacteriol.">
        <title>Revised genome sequence of Brucella suis 1330.</title>
        <authorList>
            <person name="Tae H."/>
            <person name="Shallom S."/>
            <person name="Settlage R."/>
            <person name="Preston D."/>
            <person name="Adams L.G."/>
            <person name="Garner H.R."/>
        </authorList>
    </citation>
    <scope>NUCLEOTIDE SEQUENCE [LARGE SCALE GENOMIC DNA]</scope>
    <source>
        <strain>1330</strain>
    </source>
</reference>
<gene>
    <name evidence="1" type="primary">ocd</name>
    <name evidence="5 6" type="synonym">arcB</name>
    <name type="ordered locus">BRA0899</name>
    <name type="ordered locus">BS1330_II0891</name>
</gene>
<proteinExistence type="inferred from homology"/>
<comment type="function">
    <text evidence="2">Catalyzes the conversion of L-ornithine into L-proline with release of ammonia.</text>
</comment>
<comment type="catalytic activity">
    <reaction evidence="2">
        <text>L-ornithine = L-proline + NH4(+)</text>
        <dbReference type="Rhea" id="RHEA:24368"/>
        <dbReference type="ChEBI" id="CHEBI:28938"/>
        <dbReference type="ChEBI" id="CHEBI:46911"/>
        <dbReference type="ChEBI" id="CHEBI:60039"/>
        <dbReference type="EC" id="4.3.1.12"/>
    </reaction>
</comment>
<comment type="cofactor">
    <cofactor evidence="2">
        <name>NAD(+)</name>
        <dbReference type="ChEBI" id="CHEBI:57540"/>
    </cofactor>
</comment>
<comment type="pathway">
    <text evidence="2">Amino-acid biosynthesis; L-proline biosynthesis; L-proline from L-ornithine: step 1/1.</text>
</comment>
<comment type="similarity">
    <text evidence="4">Belongs to the ornithine cyclodeaminase/mu-crystallin family.</text>
</comment>
<accession>Q8FVE4</accession>
<accession>G0KDQ9</accession>
<feature type="chain" id="PRO_0000200672" description="Ornithine cyclodeaminase">
    <location>
        <begin position="1"/>
        <end position="358"/>
    </location>
</feature>
<feature type="active site" description="Proton donor/acceptor" evidence="3">
    <location>
        <position position="234"/>
    </location>
</feature>
<feature type="binding site" evidence="3">
    <location>
        <position position="52"/>
    </location>
    <ligand>
        <name>L-ornithine</name>
        <dbReference type="ChEBI" id="CHEBI:46911"/>
    </ligand>
</feature>
<feature type="binding site" evidence="3">
    <location>
        <position position="76"/>
    </location>
    <ligand>
        <name>L-ornithine</name>
        <dbReference type="ChEBI" id="CHEBI:46911"/>
    </ligand>
</feature>
<feature type="binding site" evidence="3">
    <location>
        <position position="91"/>
    </location>
    <ligand>
        <name>NAD(+)</name>
        <dbReference type="ChEBI" id="CHEBI:57540"/>
    </ligand>
</feature>
<feature type="binding site" evidence="3">
    <location>
        <position position="119"/>
    </location>
    <ligand>
        <name>L-ornithine</name>
        <dbReference type="ChEBI" id="CHEBI:46911"/>
    </ligand>
</feature>
<feature type="binding site" evidence="3">
    <location>
        <position position="119"/>
    </location>
    <ligand>
        <name>NAD(+)</name>
        <dbReference type="ChEBI" id="CHEBI:57540"/>
    </ligand>
</feature>
<feature type="binding site" evidence="3">
    <location>
        <begin position="146"/>
        <end position="147"/>
    </location>
    <ligand>
        <name>NAD(+)</name>
        <dbReference type="ChEBI" id="CHEBI:57540"/>
    </ligand>
</feature>
<feature type="binding site" evidence="3">
    <location>
        <position position="168"/>
    </location>
    <ligand>
        <name>NAD(+)</name>
        <dbReference type="ChEBI" id="CHEBI:57540"/>
    </ligand>
</feature>
<feature type="binding site" evidence="3">
    <location>
        <position position="208"/>
    </location>
    <ligand>
        <name>NAD(+)</name>
        <dbReference type="ChEBI" id="CHEBI:57540"/>
    </ligand>
</feature>
<feature type="binding site" evidence="3">
    <location>
        <begin position="231"/>
        <end position="234"/>
    </location>
    <ligand>
        <name>NAD(+)</name>
        <dbReference type="ChEBI" id="CHEBI:57540"/>
    </ligand>
</feature>
<feature type="binding site" evidence="3">
    <location>
        <position position="234"/>
    </location>
    <ligand>
        <name>L-ornithine</name>
        <dbReference type="ChEBI" id="CHEBI:46911"/>
    </ligand>
</feature>
<feature type="binding site" evidence="3">
    <location>
        <position position="238"/>
    </location>
    <ligand>
        <name>NAD(+)</name>
        <dbReference type="ChEBI" id="CHEBI:57540"/>
    </ligand>
</feature>
<feature type="binding site" evidence="3">
    <location>
        <position position="299"/>
    </location>
    <ligand>
        <name>NAD(+)</name>
        <dbReference type="ChEBI" id="CHEBI:57540"/>
    </ligand>
</feature>
<feature type="binding site" evidence="3">
    <location>
        <position position="300"/>
    </location>
    <ligand>
        <name>L-ornithine</name>
        <dbReference type="ChEBI" id="CHEBI:46911"/>
    </ligand>
</feature>
<keyword id="KW-0056">Arginine metabolism</keyword>
<keyword id="KW-0456">Lyase</keyword>
<keyword id="KW-0520">NAD</keyword>
<dbReference type="EC" id="4.3.1.12" evidence="2"/>
<dbReference type="EMBL" id="AE014292">
    <property type="protein sequence ID" value="AAN34071.1"/>
    <property type="molecule type" value="Genomic_DNA"/>
</dbReference>
<dbReference type="EMBL" id="CP002998">
    <property type="protein sequence ID" value="AEM20347.1"/>
    <property type="molecule type" value="Genomic_DNA"/>
</dbReference>
<dbReference type="RefSeq" id="WP_006192192.1">
    <property type="nucleotide sequence ID" value="NZ_KN046805.1"/>
</dbReference>
<dbReference type="SMR" id="Q8FVE4"/>
<dbReference type="GeneID" id="45053897"/>
<dbReference type="KEGG" id="bms:BRA0899"/>
<dbReference type="KEGG" id="bsi:BS1330_II0891"/>
<dbReference type="PATRIC" id="fig|204722.21.peg.404"/>
<dbReference type="HOGENOM" id="CLU_042088_3_2_5"/>
<dbReference type="PhylomeDB" id="Q8FVE4"/>
<dbReference type="UniPathway" id="UPA00098">
    <property type="reaction ID" value="UER00357"/>
</dbReference>
<dbReference type="Proteomes" id="UP000007104">
    <property type="component" value="Chromosome II"/>
</dbReference>
<dbReference type="GO" id="GO:0008473">
    <property type="term" value="F:ornithine cyclodeaminase activity"/>
    <property type="evidence" value="ECO:0007669"/>
    <property type="project" value="UniProtKB-EC"/>
</dbReference>
<dbReference type="GO" id="GO:0006525">
    <property type="term" value="P:arginine metabolic process"/>
    <property type="evidence" value="ECO:0007669"/>
    <property type="project" value="UniProtKB-KW"/>
</dbReference>
<dbReference type="GO" id="GO:0055129">
    <property type="term" value="P:L-proline biosynthetic process"/>
    <property type="evidence" value="ECO:0007669"/>
    <property type="project" value="UniProtKB-UniPathway"/>
</dbReference>
<dbReference type="Gene3D" id="3.40.50.720">
    <property type="entry name" value="NAD(P)-binding Rossmann-like Domain"/>
    <property type="match status" value="1"/>
</dbReference>
<dbReference type="Gene3D" id="3.30.1780.10">
    <property type="entry name" value="ornithine cyclodeaminase, domain 1"/>
    <property type="match status" value="1"/>
</dbReference>
<dbReference type="InterPro" id="IPR036291">
    <property type="entry name" value="NAD(P)-bd_dom_sf"/>
</dbReference>
<dbReference type="InterPro" id="IPR003462">
    <property type="entry name" value="ODC_Mu_crystall"/>
</dbReference>
<dbReference type="InterPro" id="IPR023401">
    <property type="entry name" value="ODC_N"/>
</dbReference>
<dbReference type="NCBIfam" id="NF005762">
    <property type="entry name" value="PRK07589.1"/>
    <property type="match status" value="1"/>
</dbReference>
<dbReference type="PANTHER" id="PTHR13812">
    <property type="entry name" value="KETIMINE REDUCTASE MU-CRYSTALLIN"/>
    <property type="match status" value="1"/>
</dbReference>
<dbReference type="PANTHER" id="PTHR13812:SF19">
    <property type="entry name" value="KETIMINE REDUCTASE MU-CRYSTALLIN"/>
    <property type="match status" value="1"/>
</dbReference>
<dbReference type="Pfam" id="PF02423">
    <property type="entry name" value="OCD_Mu_crystall"/>
    <property type="match status" value="1"/>
</dbReference>
<dbReference type="SUPFAM" id="SSF51735">
    <property type="entry name" value="NAD(P)-binding Rossmann-fold domains"/>
    <property type="match status" value="1"/>
</dbReference>
<name>OCD_BRUSU</name>
<organism>
    <name type="scientific">Brucella suis biovar 1 (strain 1330)</name>
    <dbReference type="NCBI Taxonomy" id="204722"/>
    <lineage>
        <taxon>Bacteria</taxon>
        <taxon>Pseudomonadati</taxon>
        <taxon>Pseudomonadota</taxon>
        <taxon>Alphaproteobacteria</taxon>
        <taxon>Hyphomicrobiales</taxon>
        <taxon>Brucellaceae</taxon>
        <taxon>Brucella/Ochrobactrum group</taxon>
        <taxon>Brucella</taxon>
    </lineage>
</organism>
<sequence>MTQPNLNIVPFVSVDHMMKLVLRVGVETFLKELAGYVEEDFRRWQNFDKTPRVASHSKEGVIELMPTSDGTLYGFKYVNGHPKNTRDGLQTVTAFGVLANVGSGYPMLLTEMTILTALRTAATSAVAAKHLAPKNARTMAIIGNGAQSEFQALAFKAILGVDKLRLYDLDPQATAKCIRNLQGAGFDIVACKSVEEAVEGADIITTVTADKANATILTDNMVGAGVHINAVGGDCPGKTELHGDILRRSDIFVEYPPQTRIEGEIQQLPEDYPVNELWEVITGRIAGRKDARQITLFDSVGFATEDFSALRYVRDKLKDTGLYEQLDLLADPDEPRDLYGMLLRHEKLLQSESTKPAA</sequence>
<evidence type="ECO:0000250" key="1">
    <source>
        <dbReference type="UniProtKB" id="Q59175"/>
    </source>
</evidence>
<evidence type="ECO:0000250" key="2">
    <source>
        <dbReference type="UniProtKB" id="Q59701"/>
    </source>
</evidence>
<evidence type="ECO:0000250" key="3">
    <source>
        <dbReference type="UniProtKB" id="Q88H32"/>
    </source>
</evidence>
<evidence type="ECO:0000305" key="4"/>
<evidence type="ECO:0000312" key="5">
    <source>
        <dbReference type="EMBL" id="AAN34071.1"/>
    </source>
</evidence>
<evidence type="ECO:0000312" key="6">
    <source>
        <dbReference type="EMBL" id="AEM20347.1"/>
    </source>
</evidence>